<reference key="1">
    <citation type="journal article" date="2006" name="J. Bacteriol.">
        <title>Genome sequence of Aeromonas hydrophila ATCC 7966T: jack of all trades.</title>
        <authorList>
            <person name="Seshadri R."/>
            <person name="Joseph S.W."/>
            <person name="Chopra A.K."/>
            <person name="Sha J."/>
            <person name="Shaw J."/>
            <person name="Graf J."/>
            <person name="Haft D.H."/>
            <person name="Wu M."/>
            <person name="Ren Q."/>
            <person name="Rosovitz M.J."/>
            <person name="Madupu R."/>
            <person name="Tallon L."/>
            <person name="Kim M."/>
            <person name="Jin S."/>
            <person name="Vuong H."/>
            <person name="Stine O.C."/>
            <person name="Ali A."/>
            <person name="Horneman A.J."/>
            <person name="Heidelberg J.F."/>
        </authorList>
    </citation>
    <scope>NUCLEOTIDE SEQUENCE [LARGE SCALE GENOMIC DNA]</scope>
    <source>
        <strain>ATCC 7966 / DSM 30187 / BCRC 13018 / CCUG 14551 / JCM 1027 / KCTC 2358 / NCIMB 9240 / NCTC 8049</strain>
    </source>
</reference>
<proteinExistence type="inferred from homology"/>
<name>PHNX_AERHH</name>
<evidence type="ECO:0000255" key="1">
    <source>
        <dbReference type="HAMAP-Rule" id="MF_01375"/>
    </source>
</evidence>
<accession>A0KJM0</accession>
<dbReference type="EC" id="3.11.1.1" evidence="1"/>
<dbReference type="EMBL" id="CP000462">
    <property type="protein sequence ID" value="ABK38391.1"/>
    <property type="molecule type" value="Genomic_DNA"/>
</dbReference>
<dbReference type="RefSeq" id="WP_011705810.1">
    <property type="nucleotide sequence ID" value="NC_008570.1"/>
</dbReference>
<dbReference type="RefSeq" id="YP_856471.1">
    <property type="nucleotide sequence ID" value="NC_008570.1"/>
</dbReference>
<dbReference type="SMR" id="A0KJM0"/>
<dbReference type="STRING" id="380703.AHA_1940"/>
<dbReference type="EnsemblBacteria" id="ABK38391">
    <property type="protein sequence ID" value="ABK38391"/>
    <property type="gene ID" value="AHA_1940"/>
</dbReference>
<dbReference type="GeneID" id="4489099"/>
<dbReference type="KEGG" id="aha:AHA_1940"/>
<dbReference type="PATRIC" id="fig|380703.7.peg.1955"/>
<dbReference type="eggNOG" id="COG0637">
    <property type="taxonomic scope" value="Bacteria"/>
</dbReference>
<dbReference type="HOGENOM" id="CLU_045011_12_0_6"/>
<dbReference type="OrthoDB" id="5504491at2"/>
<dbReference type="Proteomes" id="UP000000756">
    <property type="component" value="Chromosome"/>
</dbReference>
<dbReference type="GO" id="GO:0005829">
    <property type="term" value="C:cytosol"/>
    <property type="evidence" value="ECO:0007669"/>
    <property type="project" value="TreeGrafter"/>
</dbReference>
<dbReference type="GO" id="GO:0000287">
    <property type="term" value="F:magnesium ion binding"/>
    <property type="evidence" value="ECO:0007669"/>
    <property type="project" value="UniProtKB-UniRule"/>
</dbReference>
<dbReference type="GO" id="GO:0008967">
    <property type="term" value="F:phosphoglycolate phosphatase activity"/>
    <property type="evidence" value="ECO:0007669"/>
    <property type="project" value="TreeGrafter"/>
</dbReference>
<dbReference type="GO" id="GO:0050194">
    <property type="term" value="F:phosphonoacetaldehyde hydrolase activity"/>
    <property type="evidence" value="ECO:0007669"/>
    <property type="project" value="UniProtKB-UniRule"/>
</dbReference>
<dbReference type="GO" id="GO:0006281">
    <property type="term" value="P:DNA repair"/>
    <property type="evidence" value="ECO:0007669"/>
    <property type="project" value="TreeGrafter"/>
</dbReference>
<dbReference type="GO" id="GO:0019700">
    <property type="term" value="P:organic phosphonate catabolic process"/>
    <property type="evidence" value="ECO:0007669"/>
    <property type="project" value="InterPro"/>
</dbReference>
<dbReference type="CDD" id="cd02586">
    <property type="entry name" value="HAD_PHN"/>
    <property type="match status" value="1"/>
</dbReference>
<dbReference type="FunFam" id="1.10.150.240:FF:000006">
    <property type="entry name" value="Phosphonoacetaldehyde hydrolase"/>
    <property type="match status" value="1"/>
</dbReference>
<dbReference type="Gene3D" id="3.40.50.1000">
    <property type="entry name" value="HAD superfamily/HAD-like"/>
    <property type="match status" value="1"/>
</dbReference>
<dbReference type="Gene3D" id="1.10.150.240">
    <property type="entry name" value="Putative phosphatase, domain 2"/>
    <property type="match status" value="1"/>
</dbReference>
<dbReference type="HAMAP" id="MF_01375">
    <property type="entry name" value="PhnX"/>
    <property type="match status" value="1"/>
</dbReference>
<dbReference type="InterPro" id="IPR050155">
    <property type="entry name" value="HAD-like_hydrolase_sf"/>
</dbReference>
<dbReference type="InterPro" id="IPR036412">
    <property type="entry name" value="HAD-like_sf"/>
</dbReference>
<dbReference type="InterPro" id="IPR006439">
    <property type="entry name" value="HAD-SF_hydro_IA"/>
</dbReference>
<dbReference type="InterPro" id="IPR023214">
    <property type="entry name" value="HAD_sf"/>
</dbReference>
<dbReference type="InterPro" id="IPR023198">
    <property type="entry name" value="PGP-like_dom2"/>
</dbReference>
<dbReference type="InterPro" id="IPR006323">
    <property type="entry name" value="Phosphonoacetald_hydro"/>
</dbReference>
<dbReference type="NCBIfam" id="TIGR01509">
    <property type="entry name" value="HAD-SF-IA-v3"/>
    <property type="match status" value="1"/>
</dbReference>
<dbReference type="NCBIfam" id="TIGR01422">
    <property type="entry name" value="phosphonatase"/>
    <property type="match status" value="1"/>
</dbReference>
<dbReference type="PANTHER" id="PTHR43434">
    <property type="entry name" value="PHOSPHOGLYCOLATE PHOSPHATASE"/>
    <property type="match status" value="1"/>
</dbReference>
<dbReference type="PANTHER" id="PTHR43434:SF19">
    <property type="entry name" value="PHOSPHONOACETALDEHYDE HYDROLASE"/>
    <property type="match status" value="1"/>
</dbReference>
<dbReference type="Pfam" id="PF00702">
    <property type="entry name" value="Hydrolase"/>
    <property type="match status" value="1"/>
</dbReference>
<dbReference type="SFLD" id="SFLDG01135">
    <property type="entry name" value="C1.5.6:_HAD__Beta-PGM__Phospha"/>
    <property type="match status" value="1"/>
</dbReference>
<dbReference type="SFLD" id="SFLDF00038">
    <property type="entry name" value="phosphonoacetaldehyde_hydrolas"/>
    <property type="match status" value="1"/>
</dbReference>
<dbReference type="SUPFAM" id="SSF56784">
    <property type="entry name" value="HAD-like"/>
    <property type="match status" value="1"/>
</dbReference>
<sequence length="279" mass="29882">MTDLQIAVDPTTDVEALILDWAGTVVDFGSFAPTSIFVEAFARAYDFPVTLDEARQPMGLGKWDHIAALGRLPSVDARWQARFGHPMSHAEVDHLYHTFMPLQIAAVTRFADPIPGVLPVLDALRGQGMKIGSCSGYPRPVMETLVPAAADHGYRPDHWVATDDLKAGGRPGPWMALANVIELGVNAVHRCIKVDDAVPGISEGLNAGMWTVGLSVSGNEFGATWEAFAAMSEAEIAARRAPAEAKLRAAGAHYVIDTLADIAPVIADINRRLAAGERP</sequence>
<comment type="function">
    <text evidence="1">Involved in phosphonate degradation.</text>
</comment>
<comment type="catalytic activity">
    <reaction evidence="1">
        <text>phosphonoacetaldehyde + H2O = acetaldehyde + phosphate + H(+)</text>
        <dbReference type="Rhea" id="RHEA:18905"/>
        <dbReference type="ChEBI" id="CHEBI:15343"/>
        <dbReference type="ChEBI" id="CHEBI:15377"/>
        <dbReference type="ChEBI" id="CHEBI:15378"/>
        <dbReference type="ChEBI" id="CHEBI:43474"/>
        <dbReference type="ChEBI" id="CHEBI:58383"/>
        <dbReference type="EC" id="3.11.1.1"/>
    </reaction>
</comment>
<comment type="cofactor">
    <cofactor evidence="1">
        <name>Mg(2+)</name>
        <dbReference type="ChEBI" id="CHEBI:18420"/>
    </cofactor>
    <text evidence="1">Binds 1 Mg(2+) ion per subunit.</text>
</comment>
<comment type="subunit">
    <text evidence="1">Homodimer.</text>
</comment>
<comment type="similarity">
    <text evidence="1">Belongs to the HAD-like hydrolase superfamily. PhnX family.</text>
</comment>
<protein>
    <recommendedName>
        <fullName evidence="1">Phosphonoacetaldehyde hydrolase</fullName>
        <shortName evidence="1">Phosphonatase</shortName>
        <ecNumber evidence="1">3.11.1.1</ecNumber>
    </recommendedName>
    <alternativeName>
        <fullName evidence="1">Phosphonoacetaldehyde phosphonohydrolase</fullName>
    </alternativeName>
</protein>
<gene>
    <name evidence="1" type="primary">phnX</name>
    <name type="ordered locus">AHA_1940</name>
</gene>
<organism>
    <name type="scientific">Aeromonas hydrophila subsp. hydrophila (strain ATCC 7966 / DSM 30187 / BCRC 13018 / CCUG 14551 / JCM 1027 / KCTC 2358 / NCIMB 9240 / NCTC 8049)</name>
    <dbReference type="NCBI Taxonomy" id="380703"/>
    <lineage>
        <taxon>Bacteria</taxon>
        <taxon>Pseudomonadati</taxon>
        <taxon>Pseudomonadota</taxon>
        <taxon>Gammaproteobacteria</taxon>
        <taxon>Aeromonadales</taxon>
        <taxon>Aeromonadaceae</taxon>
        <taxon>Aeromonas</taxon>
    </lineage>
</organism>
<feature type="chain" id="PRO_0000284573" description="Phosphonoacetaldehyde hydrolase">
    <location>
        <begin position="1"/>
        <end position="279"/>
    </location>
</feature>
<feature type="active site" description="Nucleophile" evidence="1">
    <location>
        <position position="20"/>
    </location>
</feature>
<feature type="active site" description="Schiff-base intermediate with substrate" evidence="1">
    <location>
        <position position="62"/>
    </location>
</feature>
<feature type="binding site" evidence="1">
    <location>
        <position position="20"/>
    </location>
    <ligand>
        <name>Mg(2+)</name>
        <dbReference type="ChEBI" id="CHEBI:18420"/>
    </ligand>
</feature>
<feature type="binding site" evidence="1">
    <location>
        <position position="22"/>
    </location>
    <ligand>
        <name>Mg(2+)</name>
        <dbReference type="ChEBI" id="CHEBI:18420"/>
    </ligand>
</feature>
<feature type="binding site" evidence="1">
    <location>
        <position position="196"/>
    </location>
    <ligand>
        <name>Mg(2+)</name>
        <dbReference type="ChEBI" id="CHEBI:18420"/>
    </ligand>
</feature>
<keyword id="KW-0378">Hydrolase</keyword>
<keyword id="KW-0460">Magnesium</keyword>
<keyword id="KW-0479">Metal-binding</keyword>
<keyword id="KW-1185">Reference proteome</keyword>
<keyword id="KW-0704">Schiff base</keyword>